<accession>P23580</accession>
<sequence length="586" mass="68142">MKDYVRIKIASPQQVLSWTERSLPDGRLIGRLTNFDMLHFETKKPVFGGLLCERIFGSTKTNQCFCGKYKKMFQKGYANNFVLVCANCFVEINNCNRRRFRMGYIDLVFPLIHTWYLKSRPCYLAIMLGKKVKNIKKMCFMDSYIKIRNNDGQTVGILTGAEAIYSRLSKIDLESLIEFLYKRLVGIEKLKEYNFEKYLWLRKKFINRIKLVNAFIQTNTKPIWIMIHFLPVLPPDIRPVVKLQDGTVIMTDLNFLYIDIIYGNNKIIKLRKFLLPEEFMLNEKRSLQVKVDAFINNENISENPYEQNDKKLKSITEGLKGKKGRFRENLLGKTVDYSGRSVIVVEPKLLLHECGMPLDIALELFHPILIKMLIRFKFSVGIREAKRHIYNASNFVIPVLEKVLNSYFILLNRAPTLHRLGIQSFQPKVTFEKAILLHPLVCSAFNADFDGDQMGIHIPLSLKSLAEARSMLISINNCVLPANGLPSILPSQDMVLGCYYVTLENCNLDFILTNLKIYANIEKVKSAYHKGEILIQTFVWLICQKFPNILKNSKIRIKKKRMVKKLVFFRTTIGRIFFDDMIKEFL</sequence>
<reference key="1">
    <citation type="journal article" date="1990" name="Nucleic Acids Res.">
        <title>The Euglena gracilis chloroplast rpoB gene. Novel gene organization and transcription of the RNA polymerase subunit operon.</title>
        <authorList>
            <person name="Yepiz-Plascencia G.M."/>
            <person name="Radebaugh C.A."/>
            <person name="Hallick R.B."/>
        </authorList>
    </citation>
    <scope>NUCLEOTIDE SEQUENCE [GENOMIC DNA]</scope>
    <source>
        <strain>Z / UTEX 753</strain>
    </source>
</reference>
<reference key="2">
    <citation type="journal article" date="1993" name="Nucleic Acids Res.">
        <title>Complete sequence of Euglena gracilis chloroplast DNA.</title>
        <authorList>
            <person name="Hallick R.B."/>
            <person name="Hong L."/>
            <person name="Drager R.G."/>
            <person name="Favreau M.R."/>
            <person name="Monfort A."/>
            <person name="Orsat B."/>
            <person name="Spielmann A."/>
            <person name="Stutz E."/>
        </authorList>
    </citation>
    <scope>NUCLEOTIDE SEQUENCE [LARGE SCALE GENOMIC DNA]</scope>
    <source>
        <strain>Z / UTEX 753</strain>
    </source>
</reference>
<gene>
    <name evidence="2" type="primary">rpoC1</name>
</gene>
<protein>
    <recommendedName>
        <fullName evidence="2">DNA-directed RNA polymerase subunit beta'</fullName>
        <ecNumber evidence="1">2.7.7.6</ecNumber>
    </recommendedName>
    <alternativeName>
        <fullName>PEP</fullName>
    </alternativeName>
    <alternativeName>
        <fullName evidence="2">Plastid-encoded RNA polymerase subunit beta'</fullName>
        <shortName>RNA polymerase subunit beta'</shortName>
    </alternativeName>
</protein>
<keyword id="KW-0150">Chloroplast</keyword>
<keyword id="KW-0240">DNA-directed RNA polymerase</keyword>
<keyword id="KW-0460">Magnesium</keyword>
<keyword id="KW-0479">Metal-binding</keyword>
<keyword id="KW-0548">Nucleotidyltransferase</keyword>
<keyword id="KW-0934">Plastid</keyword>
<keyword id="KW-0804">Transcription</keyword>
<keyword id="KW-0808">Transferase</keyword>
<keyword id="KW-0862">Zinc</keyword>
<evidence type="ECO:0000250" key="1">
    <source>
        <dbReference type="UniProtKB" id="P0A8T7"/>
    </source>
</evidence>
<evidence type="ECO:0000305" key="2"/>
<dbReference type="EC" id="2.7.7.6" evidence="1"/>
<dbReference type="EMBL" id="X17191">
    <property type="protein sequence ID" value="CAA35053.1"/>
    <property type="molecule type" value="Genomic_DNA"/>
</dbReference>
<dbReference type="EMBL" id="X70810">
    <property type="protein sequence ID" value="CAA50137.1"/>
    <property type="molecule type" value="Genomic_DNA"/>
</dbReference>
<dbReference type="PIR" id="S19258">
    <property type="entry name" value="RNEGB1"/>
</dbReference>
<dbReference type="RefSeq" id="NP_041950.1">
    <property type="nucleotide sequence ID" value="NC_001603.2"/>
</dbReference>
<dbReference type="SMR" id="P23580"/>
<dbReference type="GeneID" id="807501"/>
<dbReference type="GO" id="GO:0009507">
    <property type="term" value="C:chloroplast"/>
    <property type="evidence" value="ECO:0007669"/>
    <property type="project" value="UniProtKB-SubCell"/>
</dbReference>
<dbReference type="GO" id="GO:0000428">
    <property type="term" value="C:DNA-directed RNA polymerase complex"/>
    <property type="evidence" value="ECO:0007669"/>
    <property type="project" value="UniProtKB-KW"/>
</dbReference>
<dbReference type="GO" id="GO:0005739">
    <property type="term" value="C:mitochondrion"/>
    <property type="evidence" value="ECO:0007669"/>
    <property type="project" value="GOC"/>
</dbReference>
<dbReference type="GO" id="GO:0003677">
    <property type="term" value="F:DNA binding"/>
    <property type="evidence" value="ECO:0007669"/>
    <property type="project" value="InterPro"/>
</dbReference>
<dbReference type="GO" id="GO:0003899">
    <property type="term" value="F:DNA-directed RNA polymerase activity"/>
    <property type="evidence" value="ECO:0007669"/>
    <property type="project" value="UniProtKB-EC"/>
</dbReference>
<dbReference type="GO" id="GO:0046872">
    <property type="term" value="F:metal ion binding"/>
    <property type="evidence" value="ECO:0007669"/>
    <property type="project" value="UniProtKB-KW"/>
</dbReference>
<dbReference type="GO" id="GO:0006351">
    <property type="term" value="P:DNA-templated transcription"/>
    <property type="evidence" value="ECO:0007669"/>
    <property type="project" value="InterPro"/>
</dbReference>
<dbReference type="Gene3D" id="1.10.40.90">
    <property type="match status" value="1"/>
</dbReference>
<dbReference type="Gene3D" id="2.40.40.20">
    <property type="match status" value="1"/>
</dbReference>
<dbReference type="Gene3D" id="4.10.860.120">
    <property type="entry name" value="RNA polymerase II, clamp domain"/>
    <property type="match status" value="1"/>
</dbReference>
<dbReference type="Gene3D" id="1.10.274.100">
    <property type="entry name" value="RNA polymerase Rpb1, domain 3"/>
    <property type="match status" value="1"/>
</dbReference>
<dbReference type="InterPro" id="IPR045867">
    <property type="entry name" value="DNA-dir_RpoC_beta_prime"/>
</dbReference>
<dbReference type="InterPro" id="IPR000722">
    <property type="entry name" value="RNA_pol_asu"/>
</dbReference>
<dbReference type="InterPro" id="IPR006592">
    <property type="entry name" value="RNA_pol_N"/>
</dbReference>
<dbReference type="InterPro" id="IPR007080">
    <property type="entry name" value="RNA_pol_Rpb1_1"/>
</dbReference>
<dbReference type="InterPro" id="IPR007066">
    <property type="entry name" value="RNA_pol_Rpb1_3"/>
</dbReference>
<dbReference type="InterPro" id="IPR042102">
    <property type="entry name" value="RNA_pol_Rpb1_3_sf"/>
</dbReference>
<dbReference type="InterPro" id="IPR044893">
    <property type="entry name" value="RNA_pol_Rpb1_clamp_domain"/>
</dbReference>
<dbReference type="PANTHER" id="PTHR19376">
    <property type="entry name" value="DNA-DIRECTED RNA POLYMERASE"/>
    <property type="match status" value="1"/>
</dbReference>
<dbReference type="PANTHER" id="PTHR19376:SF54">
    <property type="entry name" value="DNA-DIRECTED RNA POLYMERASE SUBUNIT BETA"/>
    <property type="match status" value="1"/>
</dbReference>
<dbReference type="Pfam" id="PF04997">
    <property type="entry name" value="RNA_pol_Rpb1_1"/>
    <property type="match status" value="1"/>
</dbReference>
<dbReference type="Pfam" id="PF00623">
    <property type="entry name" value="RNA_pol_Rpb1_2"/>
    <property type="match status" value="2"/>
</dbReference>
<dbReference type="Pfam" id="PF04983">
    <property type="entry name" value="RNA_pol_Rpb1_3"/>
    <property type="match status" value="1"/>
</dbReference>
<dbReference type="SMART" id="SM00663">
    <property type="entry name" value="RPOLA_N"/>
    <property type="match status" value="1"/>
</dbReference>
<dbReference type="SUPFAM" id="SSF64484">
    <property type="entry name" value="beta and beta-prime subunits of DNA dependent RNA-polymerase"/>
    <property type="match status" value="1"/>
</dbReference>
<organism>
    <name type="scientific">Euglena gracilis</name>
    <dbReference type="NCBI Taxonomy" id="3039"/>
    <lineage>
        <taxon>Eukaryota</taxon>
        <taxon>Discoba</taxon>
        <taxon>Euglenozoa</taxon>
        <taxon>Euglenida</taxon>
        <taxon>Spirocuta</taxon>
        <taxon>Euglenophyceae</taxon>
        <taxon>Euglenales</taxon>
        <taxon>Euglenaceae</taxon>
        <taxon>Euglena</taxon>
    </lineage>
</organism>
<feature type="chain" id="PRO_0000067872" description="DNA-directed RNA polymerase subunit beta'">
    <location>
        <begin position="1"/>
        <end position="586"/>
    </location>
</feature>
<feature type="binding site" evidence="1">
    <location>
        <position position="64"/>
    </location>
    <ligand>
        <name>Zn(2+)</name>
        <dbReference type="ChEBI" id="CHEBI:29105"/>
    </ligand>
</feature>
<feature type="binding site" evidence="1">
    <location>
        <position position="66"/>
    </location>
    <ligand>
        <name>Zn(2+)</name>
        <dbReference type="ChEBI" id="CHEBI:29105"/>
    </ligand>
</feature>
<feature type="binding site" evidence="1">
    <location>
        <position position="85"/>
    </location>
    <ligand>
        <name>Zn(2+)</name>
        <dbReference type="ChEBI" id="CHEBI:29105"/>
    </ligand>
</feature>
<feature type="binding site" evidence="1">
    <location>
        <position position="88"/>
    </location>
    <ligand>
        <name>Zn(2+)</name>
        <dbReference type="ChEBI" id="CHEBI:29105"/>
    </ligand>
</feature>
<feature type="binding site" evidence="1">
    <location>
        <position position="448"/>
    </location>
    <ligand>
        <name>Mg(2+)</name>
        <dbReference type="ChEBI" id="CHEBI:18420"/>
    </ligand>
</feature>
<feature type="binding site" evidence="1">
    <location>
        <position position="450"/>
    </location>
    <ligand>
        <name>Mg(2+)</name>
        <dbReference type="ChEBI" id="CHEBI:18420"/>
    </ligand>
</feature>
<feature type="binding site" evidence="1">
    <location>
        <position position="452"/>
    </location>
    <ligand>
        <name>Mg(2+)</name>
        <dbReference type="ChEBI" id="CHEBI:18420"/>
    </ligand>
</feature>
<name>RPOC1_EUGGR</name>
<proteinExistence type="inferred from homology"/>
<comment type="function">
    <text evidence="2">DNA-dependent RNA polymerase catalyzes the transcription of DNA into RNA using the four ribonucleoside triphosphates as substrates.</text>
</comment>
<comment type="catalytic activity">
    <reaction evidence="1">
        <text>RNA(n) + a ribonucleoside 5'-triphosphate = RNA(n+1) + diphosphate</text>
        <dbReference type="Rhea" id="RHEA:21248"/>
        <dbReference type="Rhea" id="RHEA-COMP:14527"/>
        <dbReference type="Rhea" id="RHEA-COMP:17342"/>
        <dbReference type="ChEBI" id="CHEBI:33019"/>
        <dbReference type="ChEBI" id="CHEBI:61557"/>
        <dbReference type="ChEBI" id="CHEBI:140395"/>
        <dbReference type="EC" id="2.7.7.6"/>
    </reaction>
</comment>
<comment type="cofactor">
    <cofactor evidence="1">
        <name>Mg(2+)</name>
        <dbReference type="ChEBI" id="CHEBI:18420"/>
    </cofactor>
    <text evidence="1">Binds 1 Mg(2+) ion per subunit.</text>
</comment>
<comment type="cofactor">
    <cofactor evidence="1">
        <name>Zn(2+)</name>
        <dbReference type="ChEBI" id="CHEBI:29105"/>
    </cofactor>
    <text evidence="1">Binds 1 Zn(2+) ion per subunit.</text>
</comment>
<comment type="subunit">
    <text evidence="2">In plastids the minimal PEP RNA polymerase catalytic core is composed of four subunits: alpha, beta, beta', and beta''. When a (nuclear-encoded) sigma factor is associated with the core the holoenzyme is formed, which can initiate transcription.</text>
</comment>
<comment type="subcellular location">
    <subcellularLocation>
        <location>Plastid</location>
        <location>Chloroplast</location>
    </subcellularLocation>
</comment>
<comment type="similarity">
    <text evidence="2">Belongs to the RNA polymerase beta' chain family. RpoC1 subfamily.</text>
</comment>
<geneLocation type="chloroplast"/>